<reference key="1">
    <citation type="journal article" date="2000" name="Science">
        <title>Complete genome sequence of Neisseria meningitidis serogroup B strain MC58.</title>
        <authorList>
            <person name="Tettelin H."/>
            <person name="Saunders N.J."/>
            <person name="Heidelberg J.F."/>
            <person name="Jeffries A.C."/>
            <person name="Nelson K.E."/>
            <person name="Eisen J.A."/>
            <person name="Ketchum K.A."/>
            <person name="Hood D.W."/>
            <person name="Peden J.F."/>
            <person name="Dodson R.J."/>
            <person name="Nelson W.C."/>
            <person name="Gwinn M.L."/>
            <person name="DeBoy R.T."/>
            <person name="Peterson J.D."/>
            <person name="Hickey E.K."/>
            <person name="Haft D.H."/>
            <person name="Salzberg S.L."/>
            <person name="White O."/>
            <person name="Fleischmann R.D."/>
            <person name="Dougherty B.A."/>
            <person name="Mason T.M."/>
            <person name="Ciecko A."/>
            <person name="Parksey D.S."/>
            <person name="Blair E."/>
            <person name="Cittone H."/>
            <person name="Clark E.B."/>
            <person name="Cotton M.D."/>
            <person name="Utterback T.R."/>
            <person name="Khouri H.M."/>
            <person name="Qin H."/>
            <person name="Vamathevan J.J."/>
            <person name="Gill J."/>
            <person name="Scarlato V."/>
            <person name="Masignani V."/>
            <person name="Pizza M."/>
            <person name="Grandi G."/>
            <person name="Sun L."/>
            <person name="Smith H.O."/>
            <person name="Fraser C.M."/>
            <person name="Moxon E.R."/>
            <person name="Rappuoli R."/>
            <person name="Venter J.C."/>
        </authorList>
    </citation>
    <scope>NUCLEOTIDE SEQUENCE [LARGE SCALE GENOMIC DNA]</scope>
    <source>
        <strain>ATCC BAA-335 / MC58</strain>
    </source>
</reference>
<gene>
    <name type="primary">gpxA</name>
    <name type="synonym">gph</name>
    <name type="ordered locus">NMB1621</name>
</gene>
<dbReference type="EMBL" id="AE002098">
    <property type="protein sequence ID" value="AAF41973.1"/>
    <property type="molecule type" value="Genomic_DNA"/>
</dbReference>
<dbReference type="PIR" id="C81062">
    <property type="entry name" value="C81062"/>
</dbReference>
<dbReference type="RefSeq" id="NP_274627.1">
    <property type="nucleotide sequence ID" value="NC_003112.2"/>
</dbReference>
<dbReference type="RefSeq" id="WP_002218952.1">
    <property type="nucleotide sequence ID" value="NC_003112.2"/>
</dbReference>
<dbReference type="SMR" id="P0A0T5"/>
<dbReference type="FunCoup" id="P0A0T5">
    <property type="interactions" value="122"/>
</dbReference>
<dbReference type="STRING" id="122586.NMB1621"/>
<dbReference type="PaxDb" id="122586-NMB1621"/>
<dbReference type="KEGG" id="nme:NMB1621"/>
<dbReference type="PATRIC" id="fig|122586.8.peg.2082"/>
<dbReference type="HOGENOM" id="CLU_029507_2_2_4"/>
<dbReference type="InParanoid" id="P0A0T5"/>
<dbReference type="OrthoDB" id="9785502at2"/>
<dbReference type="Proteomes" id="UP000000425">
    <property type="component" value="Chromosome"/>
</dbReference>
<dbReference type="GO" id="GO:0004601">
    <property type="term" value="F:peroxidase activity"/>
    <property type="evidence" value="ECO:0007669"/>
    <property type="project" value="UniProtKB-KW"/>
</dbReference>
<dbReference type="GO" id="GO:0034599">
    <property type="term" value="P:cellular response to oxidative stress"/>
    <property type="evidence" value="ECO:0000318"/>
    <property type="project" value="GO_Central"/>
</dbReference>
<dbReference type="CDD" id="cd00340">
    <property type="entry name" value="GSH_Peroxidase"/>
    <property type="match status" value="1"/>
</dbReference>
<dbReference type="FunFam" id="3.40.30.10:FF:000349">
    <property type="entry name" value="Glutathione peroxidase"/>
    <property type="match status" value="1"/>
</dbReference>
<dbReference type="Gene3D" id="3.40.30.10">
    <property type="entry name" value="Glutaredoxin"/>
    <property type="match status" value="1"/>
</dbReference>
<dbReference type="InterPro" id="IPR000889">
    <property type="entry name" value="Glutathione_peroxidase"/>
</dbReference>
<dbReference type="InterPro" id="IPR029759">
    <property type="entry name" value="GPX_AS"/>
</dbReference>
<dbReference type="InterPro" id="IPR029760">
    <property type="entry name" value="GPX_CS"/>
</dbReference>
<dbReference type="InterPro" id="IPR036249">
    <property type="entry name" value="Thioredoxin-like_sf"/>
</dbReference>
<dbReference type="PANTHER" id="PTHR11592">
    <property type="entry name" value="GLUTATHIONE PEROXIDASE"/>
    <property type="match status" value="1"/>
</dbReference>
<dbReference type="PANTHER" id="PTHR11592:SF78">
    <property type="entry name" value="GLUTATHIONE PEROXIDASE"/>
    <property type="match status" value="1"/>
</dbReference>
<dbReference type="Pfam" id="PF00255">
    <property type="entry name" value="GSHPx"/>
    <property type="match status" value="1"/>
</dbReference>
<dbReference type="PIRSF" id="PIRSF000303">
    <property type="entry name" value="Glutathion_perox"/>
    <property type="match status" value="1"/>
</dbReference>
<dbReference type="PRINTS" id="PR01011">
    <property type="entry name" value="GLUTPROXDASE"/>
</dbReference>
<dbReference type="SUPFAM" id="SSF52833">
    <property type="entry name" value="Thioredoxin-like"/>
    <property type="match status" value="1"/>
</dbReference>
<dbReference type="PROSITE" id="PS00460">
    <property type="entry name" value="GLUTATHIONE_PEROXID_1"/>
    <property type="match status" value="1"/>
</dbReference>
<dbReference type="PROSITE" id="PS00763">
    <property type="entry name" value="GLUTATHIONE_PEROXID_2"/>
    <property type="match status" value="1"/>
</dbReference>
<dbReference type="PROSITE" id="PS51355">
    <property type="entry name" value="GLUTATHIONE_PEROXID_3"/>
    <property type="match status" value="1"/>
</dbReference>
<comment type="function">
    <text evidence="1">Important in the cellular metabolism or defense processes particular to this pathogen.</text>
</comment>
<comment type="similarity">
    <text evidence="2">Belongs to the glutathione peroxidase family.</text>
</comment>
<name>GPXA_NEIMB</name>
<keyword id="KW-0560">Oxidoreductase</keyword>
<keyword id="KW-0575">Peroxidase</keyword>
<keyword id="KW-1185">Reference proteome</keyword>
<feature type="chain" id="PRO_0000066659" description="Glutathione peroxidase homolog">
    <location>
        <begin position="1"/>
        <end position="177"/>
    </location>
</feature>
<feature type="active site" evidence="1">
    <location>
        <position position="35"/>
    </location>
</feature>
<organism>
    <name type="scientific">Neisseria meningitidis serogroup B (strain ATCC BAA-335 / MC58)</name>
    <dbReference type="NCBI Taxonomy" id="122586"/>
    <lineage>
        <taxon>Bacteria</taxon>
        <taxon>Pseudomonadati</taxon>
        <taxon>Pseudomonadota</taxon>
        <taxon>Betaproteobacteria</taxon>
        <taxon>Neisseriales</taxon>
        <taxon>Neisseriaceae</taxon>
        <taxon>Neisseria</taxon>
    </lineage>
</organism>
<evidence type="ECO:0000250" key="1"/>
<evidence type="ECO:0000305" key="2"/>
<proteinExistence type="inferred from homology"/>
<protein>
    <recommendedName>
        <fullName>Glutathione peroxidase homolog</fullName>
    </recommendedName>
</protein>
<sequence length="177" mass="19929">MGIYDFQMKDAEGNAVDLSGYRGKVLLIVNTATRCGLTPQYEALQKLYAQYTAEGLEILDFPCNQFREQAPESSGEIAQVCMMKFGTKFKIFDKIEVNGANTAPLYAYLKSVKPQDKGNHLFKDFVLKLAALGEKRDEGDIKWNFTKFLVNRDGEVVERFAPSVTPEEIEADIRALL</sequence>
<accession>P0A0T5</accession>
<accession>P52036</accession>